<evidence type="ECO:0000255" key="1">
    <source>
        <dbReference type="HAMAP-Rule" id="MF_00550"/>
    </source>
</evidence>
<name>PEPT_LATSS</name>
<sequence>MAKYEKLIPRFLEYITTETRSDENATTIPSTQTQVVFLHKLMDDLKEIGLSDVKYNEKNGYVTALLPSNIDKKVPTMGFLSHVDTADFNAKGVNPQTIENYDGESIIKLDEAGQFVLDPKEFPNMKNYKGQTLITTDGSTLLGSDDKSGVAEIITAMDYFIQHPEIKHGDIKIGLGPDEEIGTGADHFDAEDFATDFAYTMDGGPIGQLEYETFNAAAMKVDIQGKNVHPSEAKDIMINALQVAVDFQDAFPRDEVPEKTDGRQGFYHLLSLDGTVDEAHMAYIIRDFDRDGLETRKAFAAKVAEDMNAKYGEGRVKATIKDQYYNMAEVLKDHMDVVDLAKDAMEAIDIKPLIEPVRGGTDGSKISFMGIPTPNIFAGAENMHGRYEFVSVQTMEKAVDTMIKMNELNVERN</sequence>
<dbReference type="EC" id="3.4.11.4" evidence="1"/>
<dbReference type="EMBL" id="CR936503">
    <property type="protein sequence ID" value="CAI55189.1"/>
    <property type="molecule type" value="Genomic_DNA"/>
</dbReference>
<dbReference type="RefSeq" id="WP_011374590.1">
    <property type="nucleotide sequence ID" value="NC_007576.1"/>
</dbReference>
<dbReference type="SMR" id="Q38X92"/>
<dbReference type="STRING" id="314315.LCA_0888"/>
<dbReference type="GeneID" id="57133745"/>
<dbReference type="KEGG" id="lsa:LCA_0888"/>
<dbReference type="eggNOG" id="COG2195">
    <property type="taxonomic scope" value="Bacteria"/>
</dbReference>
<dbReference type="HOGENOM" id="CLU_053676_0_0_9"/>
<dbReference type="OrthoDB" id="9804934at2"/>
<dbReference type="Proteomes" id="UP000002707">
    <property type="component" value="Chromosome"/>
</dbReference>
<dbReference type="GO" id="GO:0005829">
    <property type="term" value="C:cytosol"/>
    <property type="evidence" value="ECO:0007669"/>
    <property type="project" value="TreeGrafter"/>
</dbReference>
<dbReference type="GO" id="GO:0008237">
    <property type="term" value="F:metallopeptidase activity"/>
    <property type="evidence" value="ECO:0007669"/>
    <property type="project" value="UniProtKB-KW"/>
</dbReference>
<dbReference type="GO" id="GO:0045148">
    <property type="term" value="F:tripeptide aminopeptidase activity"/>
    <property type="evidence" value="ECO:0007669"/>
    <property type="project" value="UniProtKB-UniRule"/>
</dbReference>
<dbReference type="GO" id="GO:0008270">
    <property type="term" value="F:zinc ion binding"/>
    <property type="evidence" value="ECO:0007669"/>
    <property type="project" value="UniProtKB-UniRule"/>
</dbReference>
<dbReference type="GO" id="GO:0043171">
    <property type="term" value="P:peptide catabolic process"/>
    <property type="evidence" value="ECO:0007669"/>
    <property type="project" value="UniProtKB-UniRule"/>
</dbReference>
<dbReference type="GO" id="GO:0006508">
    <property type="term" value="P:proteolysis"/>
    <property type="evidence" value="ECO:0007669"/>
    <property type="project" value="UniProtKB-UniRule"/>
</dbReference>
<dbReference type="CDD" id="cd03892">
    <property type="entry name" value="M20_peptT"/>
    <property type="match status" value="1"/>
</dbReference>
<dbReference type="Gene3D" id="3.30.70.360">
    <property type="match status" value="1"/>
</dbReference>
<dbReference type="Gene3D" id="3.40.630.10">
    <property type="entry name" value="Zn peptidases"/>
    <property type="match status" value="1"/>
</dbReference>
<dbReference type="HAMAP" id="MF_00550">
    <property type="entry name" value="Aminopeptidase_M20"/>
    <property type="match status" value="1"/>
</dbReference>
<dbReference type="InterPro" id="IPR001261">
    <property type="entry name" value="ArgE/DapE_CS"/>
</dbReference>
<dbReference type="InterPro" id="IPR036264">
    <property type="entry name" value="Bact_exopeptidase_dim_dom"/>
</dbReference>
<dbReference type="InterPro" id="IPR002933">
    <property type="entry name" value="Peptidase_M20"/>
</dbReference>
<dbReference type="InterPro" id="IPR011650">
    <property type="entry name" value="Peptidase_M20_dimer"/>
</dbReference>
<dbReference type="InterPro" id="IPR010161">
    <property type="entry name" value="Peptidase_M20B"/>
</dbReference>
<dbReference type="NCBIfam" id="TIGR01882">
    <property type="entry name" value="peptidase-T"/>
    <property type="match status" value="1"/>
</dbReference>
<dbReference type="NCBIfam" id="NF003976">
    <property type="entry name" value="PRK05469.1"/>
    <property type="match status" value="1"/>
</dbReference>
<dbReference type="NCBIfam" id="NF009920">
    <property type="entry name" value="PRK13381.1"/>
    <property type="match status" value="1"/>
</dbReference>
<dbReference type="PANTHER" id="PTHR42994">
    <property type="entry name" value="PEPTIDASE T"/>
    <property type="match status" value="1"/>
</dbReference>
<dbReference type="PANTHER" id="PTHR42994:SF1">
    <property type="entry name" value="PEPTIDASE T"/>
    <property type="match status" value="1"/>
</dbReference>
<dbReference type="Pfam" id="PF07687">
    <property type="entry name" value="M20_dimer"/>
    <property type="match status" value="1"/>
</dbReference>
<dbReference type="Pfam" id="PF01546">
    <property type="entry name" value="Peptidase_M20"/>
    <property type="match status" value="1"/>
</dbReference>
<dbReference type="PIRSF" id="PIRSF037215">
    <property type="entry name" value="Peptidase_M20B"/>
    <property type="match status" value="1"/>
</dbReference>
<dbReference type="SUPFAM" id="SSF55031">
    <property type="entry name" value="Bacterial exopeptidase dimerisation domain"/>
    <property type="match status" value="1"/>
</dbReference>
<dbReference type="SUPFAM" id="SSF53187">
    <property type="entry name" value="Zn-dependent exopeptidases"/>
    <property type="match status" value="1"/>
</dbReference>
<dbReference type="PROSITE" id="PS00759">
    <property type="entry name" value="ARGE_DAPE_CPG2_2"/>
    <property type="match status" value="1"/>
</dbReference>
<gene>
    <name evidence="1" type="primary">pepT</name>
    <name type="ordered locus">LCA_0888</name>
</gene>
<comment type="function">
    <text evidence="1">Cleaves the N-terminal amino acid of tripeptides.</text>
</comment>
<comment type="catalytic activity">
    <reaction evidence="1">
        <text>Release of the N-terminal residue from a tripeptide.</text>
        <dbReference type="EC" id="3.4.11.4"/>
    </reaction>
</comment>
<comment type="cofactor">
    <cofactor evidence="1">
        <name>Zn(2+)</name>
        <dbReference type="ChEBI" id="CHEBI:29105"/>
    </cofactor>
    <text evidence="1">Binds 2 Zn(2+) ions per subunit.</text>
</comment>
<comment type="subcellular location">
    <subcellularLocation>
        <location evidence="1">Cytoplasm</location>
    </subcellularLocation>
</comment>
<comment type="similarity">
    <text evidence="1">Belongs to the peptidase M20B family.</text>
</comment>
<feature type="chain" id="PRO_0000274016" description="Peptidase T">
    <location>
        <begin position="1"/>
        <end position="413"/>
    </location>
</feature>
<feature type="active site" evidence="1">
    <location>
        <position position="84"/>
    </location>
</feature>
<feature type="active site" description="Proton acceptor" evidence="1">
    <location>
        <position position="179"/>
    </location>
</feature>
<feature type="binding site" evidence="1">
    <location>
        <position position="82"/>
    </location>
    <ligand>
        <name>Zn(2+)</name>
        <dbReference type="ChEBI" id="CHEBI:29105"/>
        <label>1</label>
    </ligand>
</feature>
<feature type="binding site" evidence="1">
    <location>
        <position position="145"/>
    </location>
    <ligand>
        <name>Zn(2+)</name>
        <dbReference type="ChEBI" id="CHEBI:29105"/>
        <label>1</label>
    </ligand>
</feature>
<feature type="binding site" evidence="1">
    <location>
        <position position="145"/>
    </location>
    <ligand>
        <name>Zn(2+)</name>
        <dbReference type="ChEBI" id="CHEBI:29105"/>
        <label>2</label>
    </ligand>
</feature>
<feature type="binding site" evidence="1">
    <location>
        <position position="180"/>
    </location>
    <ligand>
        <name>Zn(2+)</name>
        <dbReference type="ChEBI" id="CHEBI:29105"/>
        <label>2</label>
    </ligand>
</feature>
<feature type="binding site" evidence="1">
    <location>
        <position position="202"/>
    </location>
    <ligand>
        <name>Zn(2+)</name>
        <dbReference type="ChEBI" id="CHEBI:29105"/>
        <label>1</label>
    </ligand>
</feature>
<feature type="binding site" evidence="1">
    <location>
        <position position="384"/>
    </location>
    <ligand>
        <name>Zn(2+)</name>
        <dbReference type="ChEBI" id="CHEBI:29105"/>
        <label>2</label>
    </ligand>
</feature>
<reference key="1">
    <citation type="journal article" date="2005" name="Nat. Biotechnol.">
        <title>The complete genome sequence of the meat-borne lactic acid bacterium Lactobacillus sakei 23K.</title>
        <authorList>
            <person name="Chaillou S."/>
            <person name="Champomier-Verges M.-C."/>
            <person name="Cornet M."/>
            <person name="Crutz-Le Coq A.-M."/>
            <person name="Dudez A.-M."/>
            <person name="Martin V."/>
            <person name="Beaufils S."/>
            <person name="Darbon-Rongere E."/>
            <person name="Bossy R."/>
            <person name="Loux V."/>
            <person name="Zagorec M."/>
        </authorList>
    </citation>
    <scope>NUCLEOTIDE SEQUENCE [LARGE SCALE GENOMIC DNA]</scope>
    <source>
        <strain>23K</strain>
    </source>
</reference>
<protein>
    <recommendedName>
        <fullName evidence="1">Peptidase T</fullName>
        <ecNumber evidence="1">3.4.11.4</ecNumber>
    </recommendedName>
    <alternativeName>
        <fullName evidence="1">Aminotripeptidase</fullName>
        <shortName evidence="1">Tripeptidase</shortName>
    </alternativeName>
    <alternativeName>
        <fullName evidence="1">Tripeptide aminopeptidase</fullName>
    </alternativeName>
</protein>
<keyword id="KW-0031">Aminopeptidase</keyword>
<keyword id="KW-0963">Cytoplasm</keyword>
<keyword id="KW-0378">Hydrolase</keyword>
<keyword id="KW-0479">Metal-binding</keyword>
<keyword id="KW-0482">Metalloprotease</keyword>
<keyword id="KW-0645">Protease</keyword>
<keyword id="KW-1185">Reference proteome</keyword>
<keyword id="KW-0862">Zinc</keyword>
<proteinExistence type="inferred from homology"/>
<accession>Q38X92</accession>
<organism>
    <name type="scientific">Latilactobacillus sakei subsp. sakei (strain 23K)</name>
    <name type="common">Lactobacillus sakei subsp. sakei</name>
    <dbReference type="NCBI Taxonomy" id="314315"/>
    <lineage>
        <taxon>Bacteria</taxon>
        <taxon>Bacillati</taxon>
        <taxon>Bacillota</taxon>
        <taxon>Bacilli</taxon>
        <taxon>Lactobacillales</taxon>
        <taxon>Lactobacillaceae</taxon>
        <taxon>Latilactobacillus</taxon>
    </lineage>
</organism>